<keyword id="KW-0881">Chlorophyll catabolism</keyword>
<keyword id="KW-0150">Chloroplast</keyword>
<keyword id="KW-0456">Lyase</keyword>
<keyword id="KW-0472">Membrane</keyword>
<keyword id="KW-0934">Plastid</keyword>
<keyword id="KW-1185">Reference proteome</keyword>
<keyword id="KW-0793">Thylakoid</keyword>
<keyword id="KW-0809">Transit peptide</keyword>
<feature type="transit peptide" description="Chloroplast" evidence="1">
    <location>
        <begin position="1"/>
        <end position="48"/>
    </location>
</feature>
<feature type="chain" id="PRO_0000425231" description="Magnesium dechelatase SGR1, chloroplastic">
    <location>
        <begin position="49"/>
        <end position="268"/>
    </location>
</feature>
<reference key="1">
    <citation type="journal article" date="2007" name="Plant Cell">
        <title>The senescence-induced staygreen protein regulates chlorophyll degradation.</title>
        <authorList>
            <person name="Park S.Y."/>
            <person name="Yu J.W."/>
            <person name="Park J.S."/>
            <person name="Li J."/>
            <person name="Yoo S.C."/>
            <person name="Lee N.Y."/>
            <person name="Lee S.K."/>
            <person name="Jeong S.W."/>
            <person name="Seo H.S."/>
            <person name="Koh H.J."/>
            <person name="Jeon J.S."/>
            <person name="Park Y.I."/>
            <person name="Paek N.C."/>
        </authorList>
    </citation>
    <scope>NUCLEOTIDE SEQUENCE [MRNA]</scope>
    <scope>FUNCTION</scope>
    <scope>DEVELOPMENTAL STAGE</scope>
    <source>
        <strain>cv. Columbia</strain>
    </source>
</reference>
<reference key="2">
    <citation type="journal article" date="2007" name="Plant Physiol.">
        <title>Identification of a novel chloroplast protein AtNYE1 regulating chlorophyll degradation during leaf senescence in Arabidopsis.</title>
        <authorList>
            <person name="Ren G."/>
            <person name="An K."/>
            <person name="Liao Y."/>
            <person name="Zhou X."/>
            <person name="Cao Y."/>
            <person name="Zhao H."/>
            <person name="Ge X."/>
            <person name="Kuai B."/>
        </authorList>
    </citation>
    <scope>NUCLEOTIDE SEQUENCE [MRNA]</scope>
    <scope>FUNCTION</scope>
    <scope>SUBCELLULAR LOCATION</scope>
    <scope>TISSUE SPECIFICITY</scope>
    <scope>INDUCTION BY DARK</scope>
    <scope>DEVELOPMENTAL STAGE</scope>
    <source>
        <strain>cv. Columbia</strain>
    </source>
</reference>
<reference key="3">
    <citation type="journal article" date="1999" name="Nature">
        <title>Sequence and analysis of chromosome 4 of the plant Arabidopsis thaliana.</title>
        <authorList>
            <person name="Mayer K.F.X."/>
            <person name="Schueller C."/>
            <person name="Wambutt R."/>
            <person name="Murphy G."/>
            <person name="Volckaert G."/>
            <person name="Pohl T."/>
            <person name="Duesterhoeft A."/>
            <person name="Stiekema W."/>
            <person name="Entian K.-D."/>
            <person name="Terryn N."/>
            <person name="Harris B."/>
            <person name="Ansorge W."/>
            <person name="Brandt P."/>
            <person name="Grivell L.A."/>
            <person name="Rieger M."/>
            <person name="Weichselgartner M."/>
            <person name="de Simone V."/>
            <person name="Obermaier B."/>
            <person name="Mache R."/>
            <person name="Mueller M."/>
            <person name="Kreis M."/>
            <person name="Delseny M."/>
            <person name="Puigdomenech P."/>
            <person name="Watson M."/>
            <person name="Schmidtheini T."/>
            <person name="Reichert B."/>
            <person name="Portetelle D."/>
            <person name="Perez-Alonso M."/>
            <person name="Boutry M."/>
            <person name="Bancroft I."/>
            <person name="Vos P."/>
            <person name="Hoheisel J."/>
            <person name="Zimmermann W."/>
            <person name="Wedler H."/>
            <person name="Ridley P."/>
            <person name="Langham S.-A."/>
            <person name="McCullagh B."/>
            <person name="Bilham L."/>
            <person name="Robben J."/>
            <person name="van der Schueren J."/>
            <person name="Grymonprez B."/>
            <person name="Chuang Y.-J."/>
            <person name="Vandenbussche F."/>
            <person name="Braeken M."/>
            <person name="Weltjens I."/>
            <person name="Voet M."/>
            <person name="Bastiaens I."/>
            <person name="Aert R."/>
            <person name="Defoor E."/>
            <person name="Weitzenegger T."/>
            <person name="Bothe G."/>
            <person name="Ramsperger U."/>
            <person name="Hilbert H."/>
            <person name="Braun M."/>
            <person name="Holzer E."/>
            <person name="Brandt A."/>
            <person name="Peters S."/>
            <person name="van Staveren M."/>
            <person name="Dirkse W."/>
            <person name="Mooijman P."/>
            <person name="Klein Lankhorst R."/>
            <person name="Rose M."/>
            <person name="Hauf J."/>
            <person name="Koetter P."/>
            <person name="Berneiser S."/>
            <person name="Hempel S."/>
            <person name="Feldpausch M."/>
            <person name="Lamberth S."/>
            <person name="Van den Daele H."/>
            <person name="De Keyser A."/>
            <person name="Buysshaert C."/>
            <person name="Gielen J."/>
            <person name="Villarroel R."/>
            <person name="De Clercq R."/>
            <person name="van Montagu M."/>
            <person name="Rogers J."/>
            <person name="Cronin A."/>
            <person name="Quail M.A."/>
            <person name="Bray-Allen S."/>
            <person name="Clark L."/>
            <person name="Doggett J."/>
            <person name="Hall S."/>
            <person name="Kay M."/>
            <person name="Lennard N."/>
            <person name="McLay K."/>
            <person name="Mayes R."/>
            <person name="Pettett A."/>
            <person name="Rajandream M.A."/>
            <person name="Lyne M."/>
            <person name="Benes V."/>
            <person name="Rechmann S."/>
            <person name="Borkova D."/>
            <person name="Bloecker H."/>
            <person name="Scharfe M."/>
            <person name="Grimm M."/>
            <person name="Loehnert T.-H."/>
            <person name="Dose S."/>
            <person name="de Haan M."/>
            <person name="Maarse A.C."/>
            <person name="Schaefer M."/>
            <person name="Mueller-Auer S."/>
            <person name="Gabel C."/>
            <person name="Fuchs M."/>
            <person name="Fartmann B."/>
            <person name="Granderath K."/>
            <person name="Dauner D."/>
            <person name="Herzl A."/>
            <person name="Neumann S."/>
            <person name="Argiriou A."/>
            <person name="Vitale D."/>
            <person name="Liguori R."/>
            <person name="Piravandi E."/>
            <person name="Massenet O."/>
            <person name="Quigley F."/>
            <person name="Clabauld G."/>
            <person name="Muendlein A."/>
            <person name="Felber R."/>
            <person name="Schnabl S."/>
            <person name="Hiller R."/>
            <person name="Schmidt W."/>
            <person name="Lecharny A."/>
            <person name="Aubourg S."/>
            <person name="Chefdor F."/>
            <person name="Cooke R."/>
            <person name="Berger C."/>
            <person name="Monfort A."/>
            <person name="Casacuberta E."/>
            <person name="Gibbons T."/>
            <person name="Weber N."/>
            <person name="Vandenbol M."/>
            <person name="Bargues M."/>
            <person name="Terol J."/>
            <person name="Torres A."/>
            <person name="Perez-Perez A."/>
            <person name="Purnelle B."/>
            <person name="Bent E."/>
            <person name="Johnson S."/>
            <person name="Tacon D."/>
            <person name="Jesse T."/>
            <person name="Heijnen L."/>
            <person name="Schwarz S."/>
            <person name="Scholler P."/>
            <person name="Heber S."/>
            <person name="Francs P."/>
            <person name="Bielke C."/>
            <person name="Frishman D."/>
            <person name="Haase D."/>
            <person name="Lemcke K."/>
            <person name="Mewes H.-W."/>
            <person name="Stocker S."/>
            <person name="Zaccaria P."/>
            <person name="Bevan M."/>
            <person name="Wilson R.K."/>
            <person name="de la Bastide M."/>
            <person name="Habermann K."/>
            <person name="Parnell L."/>
            <person name="Dedhia N."/>
            <person name="Gnoj L."/>
            <person name="Schutz K."/>
            <person name="Huang E."/>
            <person name="Spiegel L."/>
            <person name="Sekhon M."/>
            <person name="Murray J."/>
            <person name="Sheet P."/>
            <person name="Cordes M."/>
            <person name="Abu-Threideh J."/>
            <person name="Stoneking T."/>
            <person name="Kalicki J."/>
            <person name="Graves T."/>
            <person name="Harmon G."/>
            <person name="Edwards J."/>
            <person name="Latreille P."/>
            <person name="Courtney L."/>
            <person name="Cloud J."/>
            <person name="Abbott A."/>
            <person name="Scott K."/>
            <person name="Johnson D."/>
            <person name="Minx P."/>
            <person name="Bentley D."/>
            <person name="Fulton B."/>
            <person name="Miller N."/>
            <person name="Greco T."/>
            <person name="Kemp K."/>
            <person name="Kramer J."/>
            <person name="Fulton L."/>
            <person name="Mardis E."/>
            <person name="Dante M."/>
            <person name="Pepin K."/>
            <person name="Hillier L.W."/>
            <person name="Nelson J."/>
            <person name="Spieth J."/>
            <person name="Ryan E."/>
            <person name="Andrews S."/>
            <person name="Geisel C."/>
            <person name="Layman D."/>
            <person name="Du H."/>
            <person name="Ali J."/>
            <person name="Berghoff A."/>
            <person name="Jones K."/>
            <person name="Drone K."/>
            <person name="Cotton M."/>
            <person name="Joshu C."/>
            <person name="Antonoiu B."/>
            <person name="Zidanic M."/>
            <person name="Strong C."/>
            <person name="Sun H."/>
            <person name="Lamar B."/>
            <person name="Yordan C."/>
            <person name="Ma P."/>
            <person name="Zhong J."/>
            <person name="Preston R."/>
            <person name="Vil D."/>
            <person name="Shekher M."/>
            <person name="Matero A."/>
            <person name="Shah R."/>
            <person name="Swaby I.K."/>
            <person name="O'Shaughnessy A."/>
            <person name="Rodriguez M."/>
            <person name="Hoffman J."/>
            <person name="Till S."/>
            <person name="Granat S."/>
            <person name="Shohdy N."/>
            <person name="Hasegawa A."/>
            <person name="Hameed A."/>
            <person name="Lodhi M."/>
            <person name="Johnson A."/>
            <person name="Chen E."/>
            <person name="Marra M.A."/>
            <person name="Martienssen R."/>
            <person name="McCombie W.R."/>
        </authorList>
    </citation>
    <scope>NUCLEOTIDE SEQUENCE [LARGE SCALE GENOMIC DNA]</scope>
    <source>
        <strain>cv. Columbia</strain>
    </source>
</reference>
<reference key="4">
    <citation type="journal article" date="2017" name="Plant J.">
        <title>Araport11: a complete reannotation of the Arabidopsis thaliana reference genome.</title>
        <authorList>
            <person name="Cheng C.Y."/>
            <person name="Krishnakumar V."/>
            <person name="Chan A.P."/>
            <person name="Thibaud-Nissen F."/>
            <person name="Schobel S."/>
            <person name="Town C.D."/>
        </authorList>
    </citation>
    <scope>GENOME REANNOTATION</scope>
    <source>
        <strain>cv. Columbia</strain>
    </source>
</reference>
<reference key="5">
    <citation type="journal article" date="2003" name="Science">
        <title>Empirical analysis of transcriptional activity in the Arabidopsis genome.</title>
        <authorList>
            <person name="Yamada K."/>
            <person name="Lim J."/>
            <person name="Dale J.M."/>
            <person name="Chen H."/>
            <person name="Shinn P."/>
            <person name="Palm C.J."/>
            <person name="Southwick A.M."/>
            <person name="Wu H.C."/>
            <person name="Kim C.J."/>
            <person name="Nguyen M."/>
            <person name="Pham P.K."/>
            <person name="Cheuk R.F."/>
            <person name="Karlin-Newmann G."/>
            <person name="Liu S.X."/>
            <person name="Lam B."/>
            <person name="Sakano H."/>
            <person name="Wu T."/>
            <person name="Yu G."/>
            <person name="Miranda M."/>
            <person name="Quach H.L."/>
            <person name="Tripp M."/>
            <person name="Chang C.H."/>
            <person name="Lee J.M."/>
            <person name="Toriumi M.J."/>
            <person name="Chan M.M."/>
            <person name="Tang C.C."/>
            <person name="Onodera C.S."/>
            <person name="Deng J.M."/>
            <person name="Akiyama K."/>
            <person name="Ansari Y."/>
            <person name="Arakawa T."/>
            <person name="Banh J."/>
            <person name="Banno F."/>
            <person name="Bowser L."/>
            <person name="Brooks S.Y."/>
            <person name="Carninci P."/>
            <person name="Chao Q."/>
            <person name="Choy N."/>
            <person name="Enju A."/>
            <person name="Goldsmith A.D."/>
            <person name="Gurjal M."/>
            <person name="Hansen N.F."/>
            <person name="Hayashizaki Y."/>
            <person name="Johnson-Hopson C."/>
            <person name="Hsuan V.W."/>
            <person name="Iida K."/>
            <person name="Karnes M."/>
            <person name="Khan S."/>
            <person name="Koesema E."/>
            <person name="Ishida J."/>
            <person name="Jiang P.X."/>
            <person name="Jones T."/>
            <person name="Kawai J."/>
            <person name="Kamiya A."/>
            <person name="Meyers C."/>
            <person name="Nakajima M."/>
            <person name="Narusaka M."/>
            <person name="Seki M."/>
            <person name="Sakurai T."/>
            <person name="Satou M."/>
            <person name="Tamse R."/>
            <person name="Vaysberg M."/>
            <person name="Wallender E.K."/>
            <person name="Wong C."/>
            <person name="Yamamura Y."/>
            <person name="Yuan S."/>
            <person name="Shinozaki K."/>
            <person name="Davis R.W."/>
            <person name="Theologis A."/>
            <person name="Ecker J.R."/>
        </authorList>
    </citation>
    <scope>NUCLEOTIDE SEQUENCE [LARGE SCALE MRNA]</scope>
    <source>
        <strain>cv. Columbia</strain>
    </source>
</reference>
<reference key="6">
    <citation type="submission" date="2002-03" db="EMBL/GenBank/DDBJ databases">
        <title>Full-length cDNA from Arabidopsis thaliana.</title>
        <authorList>
            <person name="Brover V.V."/>
            <person name="Troukhan M.E."/>
            <person name="Alexandrov N.A."/>
            <person name="Lu Y.-P."/>
            <person name="Flavell R.B."/>
            <person name="Feldmann K.A."/>
        </authorList>
    </citation>
    <scope>NUCLEOTIDE SEQUENCE [LARGE SCALE MRNA]</scope>
</reference>
<reference key="7">
    <citation type="journal article" date="2007" name="Science">
        <title>Cross-species identification of Mendel's I locus.</title>
        <authorList>
            <person name="Armstead I."/>
            <person name="Donnison I."/>
            <person name="Aubry S."/>
            <person name="Harper J."/>
            <person name="Hortensteiner S."/>
            <person name="James C."/>
            <person name="Mani J."/>
            <person name="Moffet M."/>
            <person name="Ougham H."/>
            <person name="Roberts L."/>
            <person name="Thomas A."/>
            <person name="Weeden N."/>
            <person name="Thomas H."/>
            <person name="King I."/>
        </authorList>
    </citation>
    <scope>TISSUE SPECIFICITY</scope>
    <scope>DEVELOPMENTAL STAGE</scope>
    <scope>DISRUPTION PHENOTYPE</scope>
</reference>
<reference key="8">
    <citation type="journal article" date="2009" name="Plant Sci.">
        <title>The stay-green revolution: Recent progress in deciphering the mechanisms of chlorophyll degradation in higher plants.</title>
        <authorList>
            <person name="Barry C.S."/>
        </authorList>
    </citation>
    <scope>DEVELOPMENTAL STAGE</scope>
    <scope>TISSUE SPECIFICITY</scope>
</reference>
<reference key="9">
    <citation type="journal article" date="2012" name="Plant Cell">
        <title>STAY-GREEN and chlorophyll catabolic enzymes interact at light-harvesting complex II for chlorophyll detoxification during leaf senescence in Arabidopsis.</title>
        <authorList>
            <person name="Sakuraba Y."/>
            <person name="Schelbert S."/>
            <person name="Park S.Y."/>
            <person name="Han S.H."/>
            <person name="Lee B.D."/>
            <person name="Andres C.B."/>
            <person name="Kessler F."/>
            <person name="Hortensteiner S."/>
            <person name="Paek N.C."/>
        </authorList>
    </citation>
    <scope>SUBCELLULAR LOCATION</scope>
    <scope>INTERACTION WITH NYC1; PAO; RCCR AND LHCII COMPLEX</scope>
</reference>
<reference key="10">
    <citation type="journal article" date="2013" name="Biochem. Biophys. Res. Commun.">
        <title>7-Hydroxymethyl chlorophyll a reductase functions in metabolic channeling of chlorophyll breakdown intermediates during leaf senescence.</title>
        <authorList>
            <person name="Sakuraba Y."/>
            <person name="Kim Y.S."/>
            <person name="Yoo S.C."/>
            <person name="Hortensteiner S."/>
            <person name="Paek N.C."/>
        </authorList>
    </citation>
    <scope>INTERACTION WITH HCAR</scope>
    <scope>DEVELOPMENTAL STAGE</scope>
</reference>
<reference key="11">
    <citation type="journal article" date="2013" name="Proc. Natl. Acad. Sci. U.S.A.">
        <title>ABI3 controls embryo degreening through Mendel's I locus.</title>
        <authorList>
            <person name="Delmas F."/>
            <person name="Sankaranarayanan S."/>
            <person name="Deb S."/>
            <person name="Widdup E."/>
            <person name="Bournonville C."/>
            <person name="Bollier N."/>
            <person name="Northey J.G."/>
            <person name="McCourt P."/>
            <person name="Samuel M.A."/>
        </authorList>
    </citation>
    <scope>FUNCTION</scope>
    <scope>DEVELOPMENTAL STAGE</scope>
</reference>
<reference key="12">
    <citation type="journal article" date="2014" name="Mol. Plant">
        <title>Arabidopsis STAY-GREEN2 is a negative regulator of chlorophyll degradation during leaf senescence.</title>
        <authorList>
            <person name="Sakuraba Y."/>
            <person name="Park S.Y."/>
            <person name="Kim Y.S."/>
            <person name="Wang S.H."/>
            <person name="Yoo S.C."/>
            <person name="Hoertensteiner S."/>
            <person name="Paek N.C."/>
        </authorList>
    </citation>
    <scope>INDUCTION</scope>
</reference>
<reference key="13">
    <citation type="journal article" date="2016" name="Plant Cell">
        <title>Arabidopsis STAY-GREEN, Mendel's green cotyledon gene, encodes magnesium-dechelatase.</title>
        <authorList>
            <person name="Shimoda Y."/>
            <person name="Ito H."/>
            <person name="Tanaka A."/>
        </authorList>
    </citation>
    <scope>FUNCTION</scope>
    <scope>CATALYTIC ACTIVITY</scope>
</reference>
<reference key="14">
    <citation type="journal article" date="2017" name="Plant J.">
        <title>NYEs/SGRs-mediated chlorophyll degradation is critical for detoxification during seed maturation in Arabidopsis.</title>
        <authorList>
            <person name="Li Z."/>
            <person name="Wu S."/>
            <person name="Chen J."/>
            <person name="Wang X."/>
            <person name="Gao J."/>
            <person name="Ren G."/>
            <person name="Kuai B."/>
        </authorList>
    </citation>
    <scope>FUNCTION</scope>
</reference>
<reference key="15">
    <citation type="journal article" date="2018" name="J. Plant Physiol.">
        <title>Mg-dechelation of chlorophyll a by Stay-Green activates chlorophyll b degradation through expressing Non-Yellow Coloring 1 in Arabidopsis thaliana.</title>
        <authorList>
            <person name="Sato T."/>
            <person name="Shimoda Y."/>
            <person name="Matsuda K."/>
            <person name="Tanaka A."/>
            <person name="Ito H."/>
        </authorList>
    </citation>
    <scope>FUNCTION</scope>
</reference>
<proteinExistence type="evidence at protein level"/>
<comment type="function">
    <text evidence="3 7 9 10 11 18">Magnesium chelatase involved in chlorophyll a degradation in the chlorophyll-protein complexes of photosystem I (PSI) and photosystem II (PSII) (PubMed:27604697). Contributes to the degradation of PSI and PSII in the thylakoid membranes (PubMed:27604697). Required to trigger chlorophyll degradation during natural and dark-induced leaf senescence (Probable) (PubMed:17468209). Mediates chlorophyll degradation during embryo degreening (PubMed:24043799, PubMed:28873256). Recombinant SGR1 possesses high dechelating activity against chlorophyll a, very low activity against chlorophyllide a, and no activity against chlorophyll b (PubMed:27604697). Magnesium dechelation of chlorophyll a by SGR1 activates chlorophyll b degradation by inducing the expression of NYC1, an enzyme involved in chlorophyll b degradation (PubMed:29425814).</text>
</comment>
<comment type="catalytic activity">
    <reaction evidence="9">
        <text>chlorophyll a + 2 H(+) = pheophytin a + Mg(2+)</text>
        <dbReference type="Rhea" id="RHEA:52788"/>
        <dbReference type="ChEBI" id="CHEBI:15378"/>
        <dbReference type="ChEBI" id="CHEBI:18420"/>
        <dbReference type="ChEBI" id="CHEBI:58416"/>
        <dbReference type="ChEBI" id="CHEBI:136840"/>
        <dbReference type="EC" id="4.99.1.10"/>
    </reaction>
</comment>
<comment type="subunit">
    <text evidence="5 6">Interacts with HCAR, the chlorophyll catabolic enzymes (CCEs) NYC1, PAO and RCCR, and the LHCII complex. Part of a SGR1-CCE-LHCII complex, which acts in chlorophyll breakdown.</text>
</comment>
<comment type="subcellular location">
    <subcellularLocation>
        <location evidence="3 5">Plastid</location>
        <location evidence="3 5">Chloroplast thylakoid membrane</location>
    </subcellularLocation>
</comment>
<comment type="tissue specificity">
    <text evidence="2 3 12">Expressed in roots, leaves, seeds, flowers, buds, petals, sepals and siliques.</text>
</comment>
<comment type="developmental stage">
    <text evidence="2 3 4 6 7 12">Constitutively expressed at low level during leaf development, but up-regulated during seed maturation and senescence, when the leaf color changes from green to yellow.</text>
</comment>
<comment type="induction">
    <text evidence="3 8">Up-regulated by dark treatment (PubMed:17468209). Induced during natural and dark-induced leaf senescence (PubMed:24719469).</text>
</comment>
<comment type="disruption phenotype">
    <text evidence="2">RNAi-mediated knockout of the protein results in a stay-green leaf phenotype. No effect on seed degreening; probably due to redundancy with SGR1. Sgr1 and sgr2 double mutant has an embryo stay-green phenotype.</text>
</comment>
<comment type="similarity">
    <text evidence="17">Belongs to the staygreen family.</text>
</comment>
<protein>
    <recommendedName>
        <fullName evidence="17">Magnesium dechelatase SGR1, chloroplastic</fullName>
        <ecNumber evidence="9">4.99.1.10</ecNumber>
    </recommendedName>
    <alternativeName>
        <fullName evidence="13">Protein NONYELLOWING 1</fullName>
        <shortName evidence="13">AtNYE1</shortName>
    </alternativeName>
    <alternativeName>
        <fullName evidence="15">Protein STAY-GREEN 1</fullName>
    </alternativeName>
    <alternativeName>
        <fullName evidence="14">Protein STAYGREEN 1</fullName>
    </alternativeName>
</protein>
<sequence length="268" mass="30052">MCSLSAIMLLPTKLKPAYSDKRSNSSSSSSLFFNNRRSKKKNQSIVPVARLFGPAIFESSKLKVLFLGVDEKKHPSTLPRTYTLTHSDITAKLTLAISQSINNSQLQGWANRLYRDEVVAEWKKVKGKMSLHVHCHISGGHFLLDLFAKFRYFIFCKELPVVLKAFVHGDGNLLNNYPELQEALVWVYFHSNVNEFNKVECWGPLWEAVSPDGHKTETLPEARCADECSCCFPTVSSIPWSHSLSNEGVNGYSGTQTEGIATPNPEKL</sequence>
<evidence type="ECO:0000255" key="1"/>
<evidence type="ECO:0000269" key="2">
    <source>
    </source>
</evidence>
<evidence type="ECO:0000269" key="3">
    <source>
    </source>
</evidence>
<evidence type="ECO:0000269" key="4">
    <source>
    </source>
</evidence>
<evidence type="ECO:0000269" key="5">
    <source>
    </source>
</evidence>
<evidence type="ECO:0000269" key="6">
    <source>
    </source>
</evidence>
<evidence type="ECO:0000269" key="7">
    <source>
    </source>
</evidence>
<evidence type="ECO:0000269" key="8">
    <source>
    </source>
</evidence>
<evidence type="ECO:0000269" key="9">
    <source>
    </source>
</evidence>
<evidence type="ECO:0000269" key="10">
    <source>
    </source>
</evidence>
<evidence type="ECO:0000269" key="11">
    <source>
    </source>
</evidence>
<evidence type="ECO:0000269" key="12">
    <source ref="8"/>
</evidence>
<evidence type="ECO:0000303" key="13">
    <source>
    </source>
</evidence>
<evidence type="ECO:0000303" key="14">
    <source>
    </source>
</evidence>
<evidence type="ECO:0000303" key="15">
    <source>
    </source>
</evidence>
<evidence type="ECO:0000303" key="16">
    <source>
    </source>
</evidence>
<evidence type="ECO:0000305" key="17"/>
<evidence type="ECO:0000305" key="18">
    <source>
    </source>
</evidence>
<evidence type="ECO:0000312" key="19">
    <source>
        <dbReference type="Araport" id="AT4G22920"/>
    </source>
</evidence>
<evidence type="ECO:0000312" key="20">
    <source>
        <dbReference type="EMBL" id="CAA19807.1"/>
    </source>
</evidence>
<gene>
    <name evidence="16" type="primary">SGR1</name>
    <name evidence="13" type="synonym">NYE1</name>
    <name evidence="14" type="synonym">SGN1</name>
    <name evidence="19" type="ordered locus">At4g22920</name>
    <name evidence="20" type="ORF">F7H19.100</name>
</gene>
<organism>
    <name type="scientific">Arabidopsis thaliana</name>
    <name type="common">Mouse-ear cress</name>
    <dbReference type="NCBI Taxonomy" id="3702"/>
    <lineage>
        <taxon>Eukaryota</taxon>
        <taxon>Viridiplantae</taxon>
        <taxon>Streptophyta</taxon>
        <taxon>Embryophyta</taxon>
        <taxon>Tracheophyta</taxon>
        <taxon>Spermatophyta</taxon>
        <taxon>Magnoliopsida</taxon>
        <taxon>eudicotyledons</taxon>
        <taxon>Gunneridae</taxon>
        <taxon>Pentapetalae</taxon>
        <taxon>rosids</taxon>
        <taxon>malvids</taxon>
        <taxon>Brassicales</taxon>
        <taxon>Brassicaceae</taxon>
        <taxon>Camelineae</taxon>
        <taxon>Arabidopsis</taxon>
    </lineage>
</organism>
<name>SGR1_ARATH</name>
<dbReference type="EC" id="4.99.1.10" evidence="9"/>
<dbReference type="EMBL" id="AY850161">
    <property type="protein sequence ID" value="AAW82962.1"/>
    <property type="molecule type" value="mRNA"/>
</dbReference>
<dbReference type="EMBL" id="DQ437531">
    <property type="protein sequence ID" value="ABD77557.1"/>
    <property type="molecule type" value="mRNA"/>
</dbReference>
<dbReference type="EMBL" id="AL031018">
    <property type="protein sequence ID" value="CAA19807.1"/>
    <property type="molecule type" value="Genomic_DNA"/>
</dbReference>
<dbReference type="EMBL" id="AL161558">
    <property type="protein sequence ID" value="CAB79247.1"/>
    <property type="molecule type" value="Genomic_DNA"/>
</dbReference>
<dbReference type="EMBL" id="CP002687">
    <property type="protein sequence ID" value="AEE84681.1"/>
    <property type="molecule type" value="Genomic_DNA"/>
</dbReference>
<dbReference type="EMBL" id="CP002687">
    <property type="protein sequence ID" value="ANM67141.1"/>
    <property type="molecule type" value="Genomic_DNA"/>
</dbReference>
<dbReference type="EMBL" id="AY063900">
    <property type="protein sequence ID" value="AAL36256.1"/>
    <property type="molecule type" value="mRNA"/>
</dbReference>
<dbReference type="EMBL" id="AY096504">
    <property type="protein sequence ID" value="AAM20154.1"/>
    <property type="molecule type" value="mRNA"/>
</dbReference>
<dbReference type="EMBL" id="AY086912">
    <property type="protein sequence ID" value="AAM64476.1"/>
    <property type="molecule type" value="mRNA"/>
</dbReference>
<dbReference type="PIR" id="T05123">
    <property type="entry name" value="T05123"/>
</dbReference>
<dbReference type="RefSeq" id="NP_001328989.1">
    <property type="nucleotide sequence ID" value="NM_001341565.1"/>
</dbReference>
<dbReference type="RefSeq" id="NP_567673.1">
    <property type="nucleotide sequence ID" value="NM_118421.4"/>
</dbReference>
<dbReference type="SMR" id="O82741"/>
<dbReference type="BioGRID" id="13680">
    <property type="interactions" value="9"/>
</dbReference>
<dbReference type="FunCoup" id="O82741">
    <property type="interactions" value="127"/>
</dbReference>
<dbReference type="IntAct" id="O82741">
    <property type="interactions" value="5"/>
</dbReference>
<dbReference type="MINT" id="O82741"/>
<dbReference type="STRING" id="3702.O82741"/>
<dbReference type="PaxDb" id="3702-AT4G22920.1"/>
<dbReference type="ProteomicsDB" id="232633"/>
<dbReference type="DNASU" id="828391"/>
<dbReference type="EnsemblPlants" id="AT4G22920.1">
    <property type="protein sequence ID" value="AT4G22920.1"/>
    <property type="gene ID" value="AT4G22920"/>
</dbReference>
<dbReference type="EnsemblPlants" id="AT4G22920.2">
    <property type="protein sequence ID" value="AT4G22920.2"/>
    <property type="gene ID" value="AT4G22920"/>
</dbReference>
<dbReference type="GeneID" id="828391"/>
<dbReference type="Gramene" id="AT4G22920.1">
    <property type="protein sequence ID" value="AT4G22920.1"/>
    <property type="gene ID" value="AT4G22920"/>
</dbReference>
<dbReference type="Gramene" id="AT4G22920.2">
    <property type="protein sequence ID" value="AT4G22920.2"/>
    <property type="gene ID" value="AT4G22920"/>
</dbReference>
<dbReference type="KEGG" id="ath:AT4G22920"/>
<dbReference type="Araport" id="AT4G22920"/>
<dbReference type="TAIR" id="AT4G22920">
    <property type="gene designation" value="NYE1"/>
</dbReference>
<dbReference type="eggNOG" id="ENOG502S3TG">
    <property type="taxonomic scope" value="Eukaryota"/>
</dbReference>
<dbReference type="HOGENOM" id="CLU_073517_0_0_1"/>
<dbReference type="InParanoid" id="O82741"/>
<dbReference type="OMA" id="VGEWPHR"/>
<dbReference type="PhylomeDB" id="O82741"/>
<dbReference type="BioCyc" id="ARA:MONOMERQT-8230"/>
<dbReference type="BioCyc" id="MetaCyc:MONOMER-20118"/>
<dbReference type="PRO" id="PR:O82741"/>
<dbReference type="Proteomes" id="UP000006548">
    <property type="component" value="Chromosome 4"/>
</dbReference>
<dbReference type="ExpressionAtlas" id="O82741">
    <property type="expression patterns" value="baseline and differential"/>
</dbReference>
<dbReference type="GO" id="GO:0009535">
    <property type="term" value="C:chloroplast thylakoid membrane"/>
    <property type="evidence" value="ECO:0007669"/>
    <property type="project" value="UniProtKB-SubCell"/>
</dbReference>
<dbReference type="GO" id="GO:0016829">
    <property type="term" value="F:lyase activity"/>
    <property type="evidence" value="ECO:0007669"/>
    <property type="project" value="UniProtKB-KW"/>
</dbReference>
<dbReference type="GO" id="GO:0015996">
    <property type="term" value="P:chlorophyll catabolic process"/>
    <property type="evidence" value="ECO:0000315"/>
    <property type="project" value="TAIR"/>
</dbReference>
<dbReference type="InterPro" id="IPR024438">
    <property type="entry name" value="Staygreen"/>
</dbReference>
<dbReference type="PANTHER" id="PTHR31750:SF4">
    <property type="entry name" value="LP06106P"/>
    <property type="match status" value="1"/>
</dbReference>
<dbReference type="PANTHER" id="PTHR31750">
    <property type="entry name" value="PROTEIN STAY-GREEN 1, CHLOROPLASTIC-RELATED"/>
    <property type="match status" value="1"/>
</dbReference>
<dbReference type="Pfam" id="PF12638">
    <property type="entry name" value="Staygreen"/>
    <property type="match status" value="1"/>
</dbReference>
<accession>O82741</accession>
<accession>Q8LBZ2</accession>